<name>RS8_CAEEL</name>
<proteinExistence type="evidence at protein level"/>
<sequence length="208" mass="23750">MGISRDSWHKRYKTGATQPVPHKKRKFELGRPAANTKIGAHRVRLVRTRGGNEKYRALRLDSGNFSWASEQTTRKTRIVDTMYNATNNELVRTKTLVKGAIISVDAAPFRQWYEAHYALPLARKKNAKLSEEDNAILNKKRSHHTMKKYTERQKTAAVDALLIEQFNTGRLLARISSSPGQVGQANGYILEGKELDFYLRKIRAKKAK</sequence>
<protein>
    <recommendedName>
        <fullName evidence="2">Small ribosomal subunit protein eS8</fullName>
    </recommendedName>
    <alternativeName>
        <fullName>40S ribosomal protein S8</fullName>
    </alternativeName>
</protein>
<feature type="chain" id="PRO_0000122246" description="Small ribosomal subunit protein eS8">
    <location>
        <begin position="1"/>
        <end position="208"/>
    </location>
</feature>
<keyword id="KW-0002">3D-structure</keyword>
<keyword id="KW-0963">Cytoplasm</keyword>
<keyword id="KW-0449">Lipoprotein</keyword>
<keyword id="KW-0472">Membrane</keyword>
<keyword id="KW-0539">Nucleus</keyword>
<keyword id="KW-1185">Reference proteome</keyword>
<keyword id="KW-0687">Ribonucleoprotein</keyword>
<keyword id="KW-0689">Ribosomal protein</keyword>
<accession>P48156</accession>
<reference key="1">
    <citation type="journal article" date="1998" name="Science">
        <title>Genome sequence of the nematode C. elegans: a platform for investigating biology.</title>
        <authorList>
            <consortium name="The C. elegans sequencing consortium"/>
        </authorList>
    </citation>
    <scope>NUCLEOTIDE SEQUENCE [LARGE SCALE GENOMIC DNA]</scope>
    <source>
        <strain>Bristol N2</strain>
    </source>
</reference>
<organism>
    <name type="scientific">Caenorhabditis elegans</name>
    <dbReference type="NCBI Taxonomy" id="6239"/>
    <lineage>
        <taxon>Eukaryota</taxon>
        <taxon>Metazoa</taxon>
        <taxon>Ecdysozoa</taxon>
        <taxon>Nematoda</taxon>
        <taxon>Chromadorea</taxon>
        <taxon>Rhabditida</taxon>
        <taxon>Rhabditina</taxon>
        <taxon>Rhabditomorpha</taxon>
        <taxon>Rhabditoidea</taxon>
        <taxon>Rhabditidae</taxon>
        <taxon>Peloderinae</taxon>
        <taxon>Caenorhabditis</taxon>
    </lineage>
</organism>
<evidence type="ECO:0000250" key="1">
    <source>
        <dbReference type="UniProtKB" id="P62241"/>
    </source>
</evidence>
<evidence type="ECO:0000305" key="2"/>
<dbReference type="EMBL" id="FO080385">
    <property type="protein sequence ID" value="CCD63349.1"/>
    <property type="molecule type" value="Genomic_DNA"/>
</dbReference>
<dbReference type="PIR" id="T16343">
    <property type="entry name" value="T16343"/>
</dbReference>
<dbReference type="RefSeq" id="NP_001370387.1">
    <property type="nucleotide sequence ID" value="NM_001383118.2"/>
</dbReference>
<dbReference type="RefSeq" id="NP_501167.1">
    <property type="nucleotide sequence ID" value="NM_068766.4"/>
</dbReference>
<dbReference type="PDB" id="9BH5">
    <property type="method" value="EM"/>
    <property type="resolution" value="2.63 A"/>
    <property type="chains" value="AI=1-208"/>
</dbReference>
<dbReference type="PDB" id="9CAI">
    <property type="method" value="EM"/>
    <property type="resolution" value="2.59 A"/>
    <property type="chains" value="AI=1-208"/>
</dbReference>
<dbReference type="PDBsum" id="9BH5"/>
<dbReference type="PDBsum" id="9CAI"/>
<dbReference type="EMDB" id="EMD-44533"/>
<dbReference type="EMDB" id="EMD-45392"/>
<dbReference type="SMR" id="P48156"/>
<dbReference type="BioGRID" id="42622">
    <property type="interactions" value="81"/>
</dbReference>
<dbReference type="DIP" id="DIP-26614N"/>
<dbReference type="FunCoup" id="P48156">
    <property type="interactions" value="1807"/>
</dbReference>
<dbReference type="STRING" id="6239.F42C5.8a.1"/>
<dbReference type="iPTMnet" id="P48156"/>
<dbReference type="PaxDb" id="6239-F42C5.8"/>
<dbReference type="PeptideAtlas" id="P48156"/>
<dbReference type="EnsemblMetazoa" id="F42C5.8a.1">
    <property type="protein sequence ID" value="F42C5.8a.1"/>
    <property type="gene ID" value="WBGene00004477"/>
</dbReference>
<dbReference type="GeneID" id="177503"/>
<dbReference type="UCSC" id="F42C5.8.1">
    <property type="organism name" value="c. elegans"/>
</dbReference>
<dbReference type="AGR" id="WB:WBGene00004477"/>
<dbReference type="WormBase" id="F42C5.8a">
    <property type="protein sequence ID" value="CE04561"/>
    <property type="gene ID" value="WBGene00004477"/>
    <property type="gene designation" value="rps-8"/>
</dbReference>
<dbReference type="eggNOG" id="KOG3283">
    <property type="taxonomic scope" value="Eukaryota"/>
</dbReference>
<dbReference type="HOGENOM" id="CLU_080597_1_1_1"/>
<dbReference type="InParanoid" id="P48156"/>
<dbReference type="OMA" id="QRPHYRK"/>
<dbReference type="OrthoDB" id="1703270at2759"/>
<dbReference type="PhylomeDB" id="P48156"/>
<dbReference type="Reactome" id="R-CEL-156827">
    <property type="pathway name" value="L13a-mediated translational silencing of Ceruloplasmin expression"/>
</dbReference>
<dbReference type="Reactome" id="R-CEL-1799339">
    <property type="pathway name" value="SRP-dependent cotranslational protein targeting to membrane"/>
</dbReference>
<dbReference type="Reactome" id="R-CEL-72649">
    <property type="pathway name" value="Translation initiation complex formation"/>
</dbReference>
<dbReference type="Reactome" id="R-CEL-72689">
    <property type="pathway name" value="Formation of a pool of free 40S subunits"/>
</dbReference>
<dbReference type="Reactome" id="R-CEL-72695">
    <property type="pathway name" value="Formation of the ternary complex, and subsequently, the 43S complex"/>
</dbReference>
<dbReference type="Reactome" id="R-CEL-72702">
    <property type="pathway name" value="Ribosomal scanning and start codon recognition"/>
</dbReference>
<dbReference type="Reactome" id="R-CEL-72706">
    <property type="pathway name" value="GTP hydrolysis and joining of the 60S ribosomal subunit"/>
</dbReference>
<dbReference type="Reactome" id="R-CEL-975956">
    <property type="pathway name" value="Nonsense Mediated Decay (NMD) independent of the Exon Junction Complex (EJC)"/>
</dbReference>
<dbReference type="Reactome" id="R-CEL-975957">
    <property type="pathway name" value="Nonsense Mediated Decay (NMD) enhanced by the Exon Junction Complex (EJC)"/>
</dbReference>
<dbReference type="PRO" id="PR:P48156"/>
<dbReference type="Proteomes" id="UP000001940">
    <property type="component" value="Chromosome IV"/>
</dbReference>
<dbReference type="Bgee" id="WBGene00004477">
    <property type="expression patterns" value="Expressed in larva and 4 other cell types or tissues"/>
</dbReference>
<dbReference type="ExpressionAtlas" id="P48156">
    <property type="expression patterns" value="baseline and differential"/>
</dbReference>
<dbReference type="GO" id="GO:0022627">
    <property type="term" value="C:cytosolic small ribosomal subunit"/>
    <property type="evidence" value="ECO:0000318"/>
    <property type="project" value="GO_Central"/>
</dbReference>
<dbReference type="GO" id="GO:0016020">
    <property type="term" value="C:membrane"/>
    <property type="evidence" value="ECO:0007669"/>
    <property type="project" value="UniProtKB-SubCell"/>
</dbReference>
<dbReference type="GO" id="GO:0005730">
    <property type="term" value="C:nucleolus"/>
    <property type="evidence" value="ECO:0007669"/>
    <property type="project" value="UniProtKB-SubCell"/>
</dbReference>
<dbReference type="GO" id="GO:0032040">
    <property type="term" value="C:small-subunit processome"/>
    <property type="evidence" value="ECO:0000250"/>
    <property type="project" value="UniProtKB"/>
</dbReference>
<dbReference type="GO" id="GO:0003735">
    <property type="term" value="F:structural constituent of ribosome"/>
    <property type="evidence" value="ECO:0000318"/>
    <property type="project" value="GO_Central"/>
</dbReference>
<dbReference type="GO" id="GO:0000462">
    <property type="term" value="P:maturation of SSU-rRNA from tricistronic rRNA transcript (SSU-rRNA, 5.8S rRNA, LSU-rRNA)"/>
    <property type="evidence" value="ECO:0000318"/>
    <property type="project" value="GO_Central"/>
</dbReference>
<dbReference type="GO" id="GO:0042274">
    <property type="term" value="P:ribosomal small subunit biogenesis"/>
    <property type="evidence" value="ECO:0000250"/>
    <property type="project" value="UniProtKB"/>
</dbReference>
<dbReference type="GO" id="GO:0006412">
    <property type="term" value="P:translation"/>
    <property type="evidence" value="ECO:0007669"/>
    <property type="project" value="InterPro"/>
</dbReference>
<dbReference type="CDD" id="cd11380">
    <property type="entry name" value="Ribosomal_S8e_like"/>
    <property type="match status" value="1"/>
</dbReference>
<dbReference type="FunFam" id="3.10.290.70:FF:000004">
    <property type="entry name" value="40S ribosomal protein S8"/>
    <property type="match status" value="1"/>
</dbReference>
<dbReference type="Gene3D" id="3.10.290.70">
    <property type="match status" value="2"/>
</dbReference>
<dbReference type="InterPro" id="IPR001047">
    <property type="entry name" value="Ribosomal_eS8"/>
</dbReference>
<dbReference type="InterPro" id="IPR018283">
    <property type="entry name" value="Ribosomal_eS8_CS"/>
</dbReference>
<dbReference type="InterPro" id="IPR022309">
    <property type="entry name" value="Ribosomal_Se8/biogenesis_NSA2"/>
</dbReference>
<dbReference type="NCBIfam" id="TIGR00307">
    <property type="entry name" value="eS8"/>
    <property type="match status" value="1"/>
</dbReference>
<dbReference type="PANTHER" id="PTHR10394">
    <property type="entry name" value="40S RIBOSOMAL PROTEIN S8"/>
    <property type="match status" value="1"/>
</dbReference>
<dbReference type="Pfam" id="PF01201">
    <property type="entry name" value="Ribosomal_S8e"/>
    <property type="match status" value="1"/>
</dbReference>
<dbReference type="PROSITE" id="PS01193">
    <property type="entry name" value="RIBOSOMAL_S8E"/>
    <property type="match status" value="1"/>
</dbReference>
<gene>
    <name type="primary">rps-8</name>
    <name type="ORF">F42C5.8</name>
</gene>
<comment type="function">
    <text evidence="1">Component of the small ribosomal subunit. The ribosome is a large ribonucleoprotein complex responsible for the synthesis of proteins in the cell. Part of the small subunit (SSU) processome, first precursor of the small eukaryotic ribosomal subunit. During the assembly of the SSU processome in the nucleolus, many ribosome biogenesis factors, an RNA chaperone and ribosomal proteins associate with the nascent pre-rRNA and work in concert to generate RNA folding, modifications, rearrangements and cleavage as well as targeted degradation of pre-ribosomal RNA by the RNA exosome.</text>
</comment>
<comment type="subunit">
    <text evidence="1">Component of the small ribosomal subunit. Identified in a IGF2BP1-dependent mRNP granule complex containing untranslated mRNAs. Part of the small subunit (SSU) processome, composed of more than 70 proteins and the RNA chaperone small nucleolar RNA (snoRNA) U3.</text>
</comment>
<comment type="subcellular location">
    <subcellularLocation>
        <location evidence="1">Cytoplasm</location>
    </subcellularLocation>
    <subcellularLocation>
        <location evidence="1">Membrane</location>
        <topology evidence="1">Lipid-anchor</topology>
    </subcellularLocation>
    <subcellularLocation>
        <location evidence="1">Nucleus</location>
        <location evidence="1">Nucleolus</location>
    </subcellularLocation>
    <text evidence="1">Localized in cytoplasmic mRNP granules containing untranslated mRNAs.</text>
</comment>
<comment type="similarity">
    <text evidence="2">Belongs to the eukaryotic ribosomal protein eS8 family.</text>
</comment>